<feature type="chain" id="PRO_0000374018" description="RNA polymerase II-associated protein rba50">
    <location>
        <begin position="1"/>
        <end position="452"/>
    </location>
</feature>
<feature type="region of interest" description="Disordered" evidence="2">
    <location>
        <begin position="60"/>
        <end position="83"/>
    </location>
</feature>
<feature type="region of interest" description="Disordered" evidence="2">
    <location>
        <begin position="125"/>
        <end position="202"/>
    </location>
</feature>
<feature type="region of interest" description="Disordered" evidence="2">
    <location>
        <begin position="223"/>
        <end position="261"/>
    </location>
</feature>
<feature type="compositionally biased region" description="Basic and acidic residues" evidence="2">
    <location>
        <begin position="125"/>
        <end position="135"/>
    </location>
</feature>
<feature type="compositionally biased region" description="Polar residues" evidence="2">
    <location>
        <begin position="136"/>
        <end position="154"/>
    </location>
</feature>
<feature type="compositionally biased region" description="Basic and acidic residues" evidence="2">
    <location>
        <begin position="156"/>
        <end position="165"/>
    </location>
</feature>
<feature type="compositionally biased region" description="Low complexity" evidence="2">
    <location>
        <begin position="170"/>
        <end position="191"/>
    </location>
</feature>
<proteinExistence type="inferred from homology"/>
<accession>O43088</accession>
<dbReference type="EMBL" id="CU329671">
    <property type="protein sequence ID" value="CAA17041.1"/>
    <property type="molecule type" value="Genomic_DNA"/>
</dbReference>
<dbReference type="PIR" id="T40769">
    <property type="entry name" value="T40769"/>
</dbReference>
<dbReference type="RefSeq" id="NP_595263.1">
    <property type="nucleotide sequence ID" value="NM_001021170.2"/>
</dbReference>
<dbReference type="BioGRID" id="277785">
    <property type="interactions" value="3"/>
</dbReference>
<dbReference type="FunCoup" id="O43088">
    <property type="interactions" value="9"/>
</dbReference>
<dbReference type="STRING" id="284812.O43088"/>
<dbReference type="iPTMnet" id="O43088"/>
<dbReference type="PaxDb" id="4896-SPBC947.13.1"/>
<dbReference type="EnsemblFungi" id="SPBC947.13.1">
    <property type="protein sequence ID" value="SPBC947.13.1:pep"/>
    <property type="gene ID" value="SPBC947.13"/>
</dbReference>
<dbReference type="GeneID" id="2541271"/>
<dbReference type="KEGG" id="spo:2541271"/>
<dbReference type="PomBase" id="SPBC947.13">
    <property type="gene designation" value="rba50"/>
</dbReference>
<dbReference type="VEuPathDB" id="FungiDB:SPBC947.13"/>
<dbReference type="eggNOG" id="KOG1894">
    <property type="taxonomic scope" value="Eukaryota"/>
</dbReference>
<dbReference type="HOGENOM" id="CLU_031074_1_0_1"/>
<dbReference type="InParanoid" id="O43088"/>
<dbReference type="OMA" id="TQRCIAI"/>
<dbReference type="PhylomeDB" id="O43088"/>
<dbReference type="PRO" id="PR:O43088"/>
<dbReference type="Proteomes" id="UP000002485">
    <property type="component" value="Chromosome II"/>
</dbReference>
<dbReference type="GO" id="GO:0005829">
    <property type="term" value="C:cytosol"/>
    <property type="evidence" value="ECO:0007005"/>
    <property type="project" value="PomBase"/>
</dbReference>
<dbReference type="GO" id="GO:0005634">
    <property type="term" value="C:nucleus"/>
    <property type="evidence" value="ECO:0007005"/>
    <property type="project" value="PomBase"/>
</dbReference>
<dbReference type="GO" id="GO:0005665">
    <property type="term" value="C:RNA polymerase II, core complex"/>
    <property type="evidence" value="ECO:0000266"/>
    <property type="project" value="PomBase"/>
</dbReference>
<dbReference type="GO" id="GO:0006366">
    <property type="term" value="P:transcription by RNA polymerase II"/>
    <property type="evidence" value="ECO:0000266"/>
    <property type="project" value="PomBase"/>
</dbReference>
<dbReference type="InterPro" id="IPR013929">
    <property type="entry name" value="RNA_pol_II_AP1_C"/>
</dbReference>
<dbReference type="InterPro" id="IPR013930">
    <property type="entry name" value="RNA_pol_II_AP1_N"/>
</dbReference>
<dbReference type="InterPro" id="IPR039913">
    <property type="entry name" value="RPAP1/Rba50"/>
</dbReference>
<dbReference type="PANTHER" id="PTHR21483">
    <property type="entry name" value="RNA POLYMERASE II-ASSOCIATED PROTEIN 1"/>
    <property type="match status" value="1"/>
</dbReference>
<dbReference type="PANTHER" id="PTHR21483:SF18">
    <property type="entry name" value="RNA POLYMERASE II-ASSOCIATED PROTEIN 1"/>
    <property type="match status" value="1"/>
</dbReference>
<dbReference type="Pfam" id="PF08620">
    <property type="entry name" value="RPAP1_C"/>
    <property type="match status" value="1"/>
</dbReference>
<dbReference type="Pfam" id="PF08621">
    <property type="entry name" value="RPAP1_N"/>
    <property type="match status" value="1"/>
</dbReference>
<name>RBA50_SCHPO</name>
<gene>
    <name type="primary">rba50</name>
    <name type="ORF">SPBC947.13</name>
</gene>
<keyword id="KW-0963">Cytoplasm</keyword>
<keyword id="KW-0539">Nucleus</keyword>
<keyword id="KW-1185">Reference proteome</keyword>
<comment type="function">
    <text evidence="1">Forms an interface between the RNA polymerase II enzyme and chaperone/scaffolding proteins, suggesting that it is required to connect RNA polymerase II to regulators of protein complex formation.</text>
</comment>
<comment type="subunit">
    <text evidence="1">Interacts with RNA polymerase II.</text>
</comment>
<comment type="subcellular location">
    <subcellularLocation>
        <location evidence="3">Cytoplasm</location>
    </subcellularLocation>
    <subcellularLocation>
        <location evidence="3">Nucleus</location>
    </subcellularLocation>
</comment>
<comment type="similarity">
    <text evidence="4">Belongs to the RPAP1 family.</text>
</comment>
<reference key="1">
    <citation type="journal article" date="2002" name="Nature">
        <title>The genome sequence of Schizosaccharomyces pombe.</title>
        <authorList>
            <person name="Wood V."/>
            <person name="Gwilliam R."/>
            <person name="Rajandream M.A."/>
            <person name="Lyne M.H."/>
            <person name="Lyne R."/>
            <person name="Stewart A."/>
            <person name="Sgouros J.G."/>
            <person name="Peat N."/>
            <person name="Hayles J."/>
            <person name="Baker S.G."/>
            <person name="Basham D."/>
            <person name="Bowman S."/>
            <person name="Brooks K."/>
            <person name="Brown D."/>
            <person name="Brown S."/>
            <person name="Chillingworth T."/>
            <person name="Churcher C.M."/>
            <person name="Collins M."/>
            <person name="Connor R."/>
            <person name="Cronin A."/>
            <person name="Davis P."/>
            <person name="Feltwell T."/>
            <person name="Fraser A."/>
            <person name="Gentles S."/>
            <person name="Goble A."/>
            <person name="Hamlin N."/>
            <person name="Harris D.E."/>
            <person name="Hidalgo J."/>
            <person name="Hodgson G."/>
            <person name="Holroyd S."/>
            <person name="Hornsby T."/>
            <person name="Howarth S."/>
            <person name="Huckle E.J."/>
            <person name="Hunt S."/>
            <person name="Jagels K."/>
            <person name="James K.D."/>
            <person name="Jones L."/>
            <person name="Jones M."/>
            <person name="Leather S."/>
            <person name="McDonald S."/>
            <person name="McLean J."/>
            <person name="Mooney P."/>
            <person name="Moule S."/>
            <person name="Mungall K.L."/>
            <person name="Murphy L.D."/>
            <person name="Niblett D."/>
            <person name="Odell C."/>
            <person name="Oliver K."/>
            <person name="O'Neil S."/>
            <person name="Pearson D."/>
            <person name="Quail M.A."/>
            <person name="Rabbinowitsch E."/>
            <person name="Rutherford K.M."/>
            <person name="Rutter S."/>
            <person name="Saunders D."/>
            <person name="Seeger K."/>
            <person name="Sharp S."/>
            <person name="Skelton J."/>
            <person name="Simmonds M.N."/>
            <person name="Squares R."/>
            <person name="Squares S."/>
            <person name="Stevens K."/>
            <person name="Taylor K."/>
            <person name="Taylor R.G."/>
            <person name="Tivey A."/>
            <person name="Walsh S.V."/>
            <person name="Warren T."/>
            <person name="Whitehead S."/>
            <person name="Woodward J.R."/>
            <person name="Volckaert G."/>
            <person name="Aert R."/>
            <person name="Robben J."/>
            <person name="Grymonprez B."/>
            <person name="Weltjens I."/>
            <person name="Vanstreels E."/>
            <person name="Rieger M."/>
            <person name="Schaefer M."/>
            <person name="Mueller-Auer S."/>
            <person name="Gabel C."/>
            <person name="Fuchs M."/>
            <person name="Duesterhoeft A."/>
            <person name="Fritzc C."/>
            <person name="Holzer E."/>
            <person name="Moestl D."/>
            <person name="Hilbert H."/>
            <person name="Borzym K."/>
            <person name="Langer I."/>
            <person name="Beck A."/>
            <person name="Lehrach H."/>
            <person name="Reinhardt R."/>
            <person name="Pohl T.M."/>
            <person name="Eger P."/>
            <person name="Zimmermann W."/>
            <person name="Wedler H."/>
            <person name="Wambutt R."/>
            <person name="Purnelle B."/>
            <person name="Goffeau A."/>
            <person name="Cadieu E."/>
            <person name="Dreano S."/>
            <person name="Gloux S."/>
            <person name="Lelaure V."/>
            <person name="Mottier S."/>
            <person name="Galibert F."/>
            <person name="Aves S.J."/>
            <person name="Xiang Z."/>
            <person name="Hunt C."/>
            <person name="Moore K."/>
            <person name="Hurst S.M."/>
            <person name="Lucas M."/>
            <person name="Rochet M."/>
            <person name="Gaillardin C."/>
            <person name="Tallada V.A."/>
            <person name="Garzon A."/>
            <person name="Thode G."/>
            <person name="Daga R.R."/>
            <person name="Cruzado L."/>
            <person name="Jimenez J."/>
            <person name="Sanchez M."/>
            <person name="del Rey F."/>
            <person name="Benito J."/>
            <person name="Dominguez A."/>
            <person name="Revuelta J.L."/>
            <person name="Moreno S."/>
            <person name="Armstrong J."/>
            <person name="Forsburg S.L."/>
            <person name="Cerutti L."/>
            <person name="Lowe T."/>
            <person name="McCombie W.R."/>
            <person name="Paulsen I."/>
            <person name="Potashkin J."/>
            <person name="Shpakovski G.V."/>
            <person name="Ussery D."/>
            <person name="Barrell B.G."/>
            <person name="Nurse P."/>
        </authorList>
    </citation>
    <scope>NUCLEOTIDE SEQUENCE [LARGE SCALE GENOMIC DNA]</scope>
    <source>
        <strain>972 / ATCC 24843</strain>
    </source>
</reference>
<reference key="2">
    <citation type="journal article" date="2006" name="Nat. Biotechnol.">
        <title>ORFeome cloning and global analysis of protein localization in the fission yeast Schizosaccharomyces pombe.</title>
        <authorList>
            <person name="Matsuyama A."/>
            <person name="Arai R."/>
            <person name="Yashiroda Y."/>
            <person name="Shirai A."/>
            <person name="Kamata A."/>
            <person name="Sekido S."/>
            <person name="Kobayashi Y."/>
            <person name="Hashimoto A."/>
            <person name="Hamamoto M."/>
            <person name="Hiraoka Y."/>
            <person name="Horinouchi S."/>
            <person name="Yoshida M."/>
        </authorList>
    </citation>
    <scope>SUBCELLULAR LOCATION [LARGE SCALE ANALYSIS]</scope>
</reference>
<sequence length="452" mass="50797">MENHRSVFSNVIGDIVEKPPKQLVEVKRSVQRHARGFPAVSRTLPKRESKSMSAYKEKMLRKNKESPGLEGKGNLDDQGIDEENRVRLERMNDLEIEGAQEEIRATIRDDLLEMLKKRAFKKKAERELAQRKDRSSQVNTPDLSQRPSDDSFLSNEKLRSSEKLNRNLQSVLSSEAVDSSSGSPSPPMALSQAEIRSRQTKRVMFPDKAEELTKIFSLPTLAPIKGNEEDDASEDAKHSPKKHSPALSDGTTSNDGAPLEFDTTHLPEKQVTLDPNDPSFYEQLHDKYFPNLPVDEKQMQWLHDPSPAENSYHPSVESLHAHEIRFGFKGEIITPSQSQTIPVNEGLHHHGDAPFSAGYTLVELAHLLRSSFPTQRCIAIQTIGRIIYRLNSGEFREVLSPELHTLVEDAHIYELLAAAASDQVKHLTVRSLAIEALWLCSQSQHGSSRSAV</sequence>
<organism>
    <name type="scientific">Schizosaccharomyces pombe (strain 972 / ATCC 24843)</name>
    <name type="common">Fission yeast</name>
    <dbReference type="NCBI Taxonomy" id="284812"/>
    <lineage>
        <taxon>Eukaryota</taxon>
        <taxon>Fungi</taxon>
        <taxon>Dikarya</taxon>
        <taxon>Ascomycota</taxon>
        <taxon>Taphrinomycotina</taxon>
        <taxon>Schizosaccharomycetes</taxon>
        <taxon>Schizosaccharomycetales</taxon>
        <taxon>Schizosaccharomycetaceae</taxon>
        <taxon>Schizosaccharomyces</taxon>
    </lineage>
</organism>
<protein>
    <recommendedName>
        <fullName>RNA polymerase II-associated protein rba50</fullName>
    </recommendedName>
</protein>
<evidence type="ECO:0000250" key="1"/>
<evidence type="ECO:0000256" key="2">
    <source>
        <dbReference type="SAM" id="MobiDB-lite"/>
    </source>
</evidence>
<evidence type="ECO:0000269" key="3">
    <source>
    </source>
</evidence>
<evidence type="ECO:0000305" key="4"/>